<name>MAMD1_MOUSE</name>
<proteinExistence type="inferred from homology"/>
<organism>
    <name type="scientific">Mus musculus</name>
    <name type="common">Mouse</name>
    <dbReference type="NCBI Taxonomy" id="10090"/>
    <lineage>
        <taxon>Eukaryota</taxon>
        <taxon>Metazoa</taxon>
        <taxon>Chordata</taxon>
        <taxon>Craniata</taxon>
        <taxon>Vertebrata</taxon>
        <taxon>Euteleostomi</taxon>
        <taxon>Mammalia</taxon>
        <taxon>Eutheria</taxon>
        <taxon>Euarchontoglires</taxon>
        <taxon>Glires</taxon>
        <taxon>Rodentia</taxon>
        <taxon>Myomorpha</taxon>
        <taxon>Muroidea</taxon>
        <taxon>Muridae</taxon>
        <taxon>Murinae</taxon>
        <taxon>Mus</taxon>
        <taxon>Mus</taxon>
    </lineage>
</organism>
<evidence type="ECO:0000250" key="1"/>
<evidence type="ECO:0000256" key="2">
    <source>
        <dbReference type="SAM" id="MobiDB-lite"/>
    </source>
</evidence>
<evidence type="ECO:0000269" key="3">
    <source>
    </source>
</evidence>
<evidence type="ECO:0000305" key="4"/>
<keyword id="KW-0010">Activator</keyword>
<keyword id="KW-0539">Nucleus</keyword>
<keyword id="KW-1185">Reference proteome</keyword>
<keyword id="KW-0804">Transcription</keyword>
<keyword id="KW-0805">Transcription regulation</keyword>
<protein>
    <recommendedName>
        <fullName>Mastermind-like domain-containing protein 1</fullName>
    </recommendedName>
</protein>
<dbReference type="EMBL" id="AL731843">
    <property type="status" value="NOT_ANNOTATED_CDS"/>
    <property type="molecule type" value="Genomic_DNA"/>
</dbReference>
<dbReference type="CCDS" id="CCDS57759.1"/>
<dbReference type="RefSeq" id="NP_001074823.2">
    <property type="nucleotide sequence ID" value="NM_001081354.2"/>
</dbReference>
<dbReference type="RefSeq" id="XP_011245924.1">
    <property type="nucleotide sequence ID" value="XM_011247622.3"/>
</dbReference>
<dbReference type="FunCoup" id="P0C6A2">
    <property type="interactions" value="591"/>
</dbReference>
<dbReference type="STRING" id="10090.ENSMUSP00000080737"/>
<dbReference type="GlyGen" id="P0C6A2">
    <property type="glycosylation" value="3 sites, 1 O-linked glycan (2 sites)"/>
</dbReference>
<dbReference type="iPTMnet" id="P0C6A2"/>
<dbReference type="PhosphoSitePlus" id="P0C6A2"/>
<dbReference type="PaxDb" id="10090-ENSMUSP00000080737"/>
<dbReference type="ProteomicsDB" id="292084"/>
<dbReference type="Antibodypedia" id="16946">
    <property type="antibodies" value="61 antibodies from 18 providers"/>
</dbReference>
<dbReference type="Ensembl" id="ENSMUST00000082088.10">
    <property type="protein sequence ID" value="ENSMUSP00000080737.4"/>
    <property type="gene ID" value="ENSMUSG00000059401.15"/>
</dbReference>
<dbReference type="GeneID" id="333639"/>
<dbReference type="KEGG" id="mmu:333639"/>
<dbReference type="UCSC" id="uc009tjk.1">
    <property type="organism name" value="mouse"/>
</dbReference>
<dbReference type="AGR" id="MGI:3045303"/>
<dbReference type="CTD" id="10046"/>
<dbReference type="MGI" id="MGI:3045303">
    <property type="gene designation" value="Mamld1"/>
</dbReference>
<dbReference type="VEuPathDB" id="HostDB:ENSMUSG00000059401"/>
<dbReference type="eggNOG" id="ENOG502QV1F">
    <property type="taxonomic scope" value="Eukaryota"/>
</dbReference>
<dbReference type="GeneTree" id="ENSGT00730000111366"/>
<dbReference type="InParanoid" id="P0C6A2"/>
<dbReference type="OMA" id="YCPEKLS"/>
<dbReference type="OrthoDB" id="8630229at2759"/>
<dbReference type="TreeFam" id="TF332922"/>
<dbReference type="Reactome" id="R-MMU-2122947">
    <property type="pathway name" value="NOTCH1 Intracellular Domain Regulates Transcription"/>
</dbReference>
<dbReference type="Reactome" id="R-MMU-350054">
    <property type="pathway name" value="Notch-HLH transcription pathway"/>
</dbReference>
<dbReference type="Reactome" id="R-MMU-8941856">
    <property type="pathway name" value="RUNX3 regulates NOTCH signaling"/>
</dbReference>
<dbReference type="BioGRID-ORCS" id="333639">
    <property type="hits" value="1 hit in 76 CRISPR screens"/>
</dbReference>
<dbReference type="PRO" id="PR:P0C6A2"/>
<dbReference type="Proteomes" id="UP000000589">
    <property type="component" value="Chromosome X"/>
</dbReference>
<dbReference type="RNAct" id="P0C6A2">
    <property type="molecule type" value="protein"/>
</dbReference>
<dbReference type="Bgee" id="ENSMUSG00000059401">
    <property type="expression patterns" value="Expressed in diaphragm and 64 other cell types or tissues"/>
</dbReference>
<dbReference type="ExpressionAtlas" id="P0C6A2">
    <property type="expression patterns" value="baseline and differential"/>
</dbReference>
<dbReference type="GO" id="GO:0005813">
    <property type="term" value="C:centrosome"/>
    <property type="evidence" value="ECO:0007669"/>
    <property type="project" value="Ensembl"/>
</dbReference>
<dbReference type="GO" id="GO:0005794">
    <property type="term" value="C:Golgi apparatus"/>
    <property type="evidence" value="ECO:0007669"/>
    <property type="project" value="Ensembl"/>
</dbReference>
<dbReference type="GO" id="GO:0016604">
    <property type="term" value="C:nuclear body"/>
    <property type="evidence" value="ECO:0007669"/>
    <property type="project" value="Ensembl"/>
</dbReference>
<dbReference type="GO" id="GO:0008584">
    <property type="term" value="P:male gonad development"/>
    <property type="evidence" value="ECO:0000315"/>
    <property type="project" value="MGI"/>
</dbReference>
<dbReference type="GO" id="GO:0006357">
    <property type="term" value="P:regulation of transcription by RNA polymerase II"/>
    <property type="evidence" value="ECO:0000315"/>
    <property type="project" value="MGI"/>
</dbReference>
<dbReference type="GO" id="GO:0048515">
    <property type="term" value="P:spermatid differentiation"/>
    <property type="evidence" value="ECO:0000315"/>
    <property type="project" value="MGI"/>
</dbReference>
<dbReference type="GO" id="GO:0007283">
    <property type="term" value="P:spermatogenesis"/>
    <property type="evidence" value="ECO:0000315"/>
    <property type="project" value="MGI"/>
</dbReference>
<dbReference type="InterPro" id="IPR026131">
    <property type="entry name" value="MAMLD1"/>
</dbReference>
<dbReference type="PANTHER" id="PTHR15275">
    <property type="entry name" value="CG1 PROTEIN/F18"/>
    <property type="match status" value="1"/>
</dbReference>
<dbReference type="PANTHER" id="PTHR15275:SF0">
    <property type="entry name" value="MASTERMIND-LIKE DOMAIN-CONTAINING PROTEIN 1"/>
    <property type="match status" value="1"/>
</dbReference>
<reference key="1">
    <citation type="journal article" date="2009" name="PLoS Biol.">
        <title>Lineage-specific biology revealed by a finished genome assembly of the mouse.</title>
        <authorList>
            <person name="Church D.M."/>
            <person name="Goodstadt L."/>
            <person name="Hillier L.W."/>
            <person name="Zody M.C."/>
            <person name="Goldstein S."/>
            <person name="She X."/>
            <person name="Bult C.J."/>
            <person name="Agarwala R."/>
            <person name="Cherry J.L."/>
            <person name="DiCuccio M."/>
            <person name="Hlavina W."/>
            <person name="Kapustin Y."/>
            <person name="Meric P."/>
            <person name="Maglott D."/>
            <person name="Birtle Z."/>
            <person name="Marques A.C."/>
            <person name="Graves T."/>
            <person name="Zhou S."/>
            <person name="Teague B."/>
            <person name="Potamousis K."/>
            <person name="Churas C."/>
            <person name="Place M."/>
            <person name="Herschleb J."/>
            <person name="Runnheim R."/>
            <person name="Forrest D."/>
            <person name="Amos-Landgraf J."/>
            <person name="Schwartz D.C."/>
            <person name="Cheng Z."/>
            <person name="Lindblad-Toh K."/>
            <person name="Eichler E.E."/>
            <person name="Ponting C.P."/>
        </authorList>
    </citation>
    <scope>NUCLEOTIDE SEQUENCE [LARGE SCALE GENOMIC DNA]</scope>
    <source>
        <strain>C57BL/6J</strain>
    </source>
</reference>
<reference key="2">
    <citation type="journal article" date="2008" name="J. Biol. Chem.">
        <title>Mastermind-like domain-containing 1 (MAMLD1 or CXorf6) transactivates the Hes3 promoter, augments testosterone production, and contains the SF1 target sequence.</title>
        <authorList>
            <person name="Fukami M."/>
            <person name="Wada Y."/>
            <person name="Okada M."/>
            <person name="Kato F."/>
            <person name="Katsumata N."/>
            <person name="Baba T."/>
            <person name="Morohashi K."/>
            <person name="Laporte J."/>
            <person name="Kitagawa M."/>
            <person name="Ogata T."/>
        </authorList>
    </citation>
    <scope>FUNCTION</scope>
</reference>
<comment type="function">
    <text evidence="1 3">Transactivates the HES3 promoter independently of NOTCH proteins. HES3 is a non-canonical NOTCH target gene which lacks binding sites for RBPJ (By similarity). Required for testosterone production.</text>
</comment>
<comment type="subcellular location">
    <subcellularLocation>
        <location evidence="1">Nucleus</location>
    </subcellularLocation>
    <text evidence="1">Punctate nuclear localization.</text>
</comment>
<comment type="similarity">
    <text evidence="4">Belongs to the mastermind family.</text>
</comment>
<gene>
    <name type="primary">Mamld1</name>
</gene>
<accession>P0C6A2</accession>
<accession>B1AW19</accession>
<feature type="chain" id="PRO_0000317430" description="Mastermind-like domain-containing protein 1">
    <location>
        <begin position="1"/>
        <end position="803"/>
    </location>
</feature>
<feature type="region of interest" description="Disordered" evidence="2">
    <location>
        <begin position="22"/>
        <end position="50"/>
    </location>
</feature>
<feature type="region of interest" description="Disordered" evidence="2">
    <location>
        <begin position="292"/>
        <end position="374"/>
    </location>
</feature>
<feature type="region of interest" description="Disordered" evidence="2">
    <location>
        <begin position="420"/>
        <end position="452"/>
    </location>
</feature>
<feature type="region of interest" description="Disordered" evidence="2">
    <location>
        <begin position="486"/>
        <end position="641"/>
    </location>
</feature>
<feature type="compositionally biased region" description="Polar residues" evidence="2">
    <location>
        <begin position="296"/>
        <end position="309"/>
    </location>
</feature>
<feature type="compositionally biased region" description="Pro residues" evidence="2">
    <location>
        <begin position="312"/>
        <end position="340"/>
    </location>
</feature>
<feature type="compositionally biased region" description="Low complexity" evidence="2">
    <location>
        <begin position="347"/>
        <end position="362"/>
    </location>
</feature>
<feature type="compositionally biased region" description="Polar residues" evidence="2">
    <location>
        <begin position="363"/>
        <end position="374"/>
    </location>
</feature>
<feature type="compositionally biased region" description="Polar residues" evidence="2">
    <location>
        <begin position="441"/>
        <end position="452"/>
    </location>
</feature>
<feature type="compositionally biased region" description="Polar residues" evidence="2">
    <location>
        <begin position="495"/>
        <end position="526"/>
    </location>
</feature>
<feature type="compositionally biased region" description="Polar residues" evidence="2">
    <location>
        <begin position="547"/>
        <end position="564"/>
    </location>
</feature>
<feature type="compositionally biased region" description="Low complexity" evidence="2">
    <location>
        <begin position="571"/>
        <end position="588"/>
    </location>
</feature>
<feature type="compositionally biased region" description="Basic residues" evidence="2">
    <location>
        <begin position="592"/>
        <end position="622"/>
    </location>
</feature>
<feature type="compositionally biased region" description="Low complexity" evidence="2">
    <location>
        <begin position="623"/>
        <end position="641"/>
    </location>
</feature>
<sequence length="803" mass="87598">MDDWKSRLVIENMLPHFNMVGNRQETRKLQESGTSKRRQEGENFHFTGMADGSYPNKIKRPCLEDVTLSMGPGAHPTSLSTEMQMPTLNMNPTSADLGVAGQSLLLENNPLDSNVVNSSAMGSPFGVPSTADTGLKGHAVPYYEKNNSMPAVDQELQDLLEELTKIQEPSSNDLDLEKILGSKPEEPLVLHNPQAPLGPPAKLPVQMPHMESLGSSKEFASSCSQVAGTSLPIMPSSTGMSYSIPSSSKQIVSSSSSTAQAQVKNQVQNMLPVTMPPLSVPQWHHAHQLKALAASKQGSATKQGSNRNWSSLPPPGLSPPYLPVPSPHPPPPQPPPPPFSPQNFTASCMSSSSLSGSAVQSSPNALLSSMAPSSNASLGPTLPYVPAKLPGLPLNQQPQFSPQSSILANLVSSSVKSPQGHLISALPTSTPGPSPPYRPENLSSPGLPQQSFTPQYSLIRSLTPTSNLLSQQQQQQQQQQQQQQQQQQQQQQQQHQANSIFKPMTSSQQPKTLSMIMQQGLSSSSPEAPEPFTFSNTKPLSHFVSEPSPQKMASMSTHSRQSSLLHYLPQATPAHAPSATASSTATATLQLQHHHQQHHHQQHHHQQQHHQQQHHQQHHHQQQQHQQQQHQQQQQQQPDQSSFLLQQIMQQPQRFQRMMASDSMPALPGQGCCHRCAWTSTALWLEHQHQQWNSLTSTHGHVPPSNLTHVDKACKLGEARPPHVSLGRQPPSRQALGSESFLPGSSFAHELARVTSTSSYNTSEAAPWGGWDPKAWRQVPAPLLPSCDAAAREAEIRSYGNDP</sequence>